<name>VCX1_HUMAN</name>
<evidence type="ECO:0000256" key="1">
    <source>
        <dbReference type="SAM" id="MobiDB-lite"/>
    </source>
</evidence>
<evidence type="ECO:0000269" key="2">
    <source>
    </source>
</evidence>
<evidence type="ECO:0000269" key="3">
    <source>
    </source>
</evidence>
<evidence type="ECO:0000305" key="4"/>
<reference key="1">
    <citation type="journal article" date="2000" name="Am. J. Hum. Genet.">
        <title>A member of a gene family on Xp22.3, VCX-A, is deleted in patients with X-linked nonspecific mental retardation.</title>
        <authorList>
            <person name="Fukami M."/>
            <person name="Kirsch S."/>
            <person name="Schiller S."/>
            <person name="Richter A."/>
            <person name="Benes V."/>
            <person name="Franco B."/>
            <person name="Muroya K."/>
            <person name="Rao E."/>
            <person name="Merker S."/>
            <person name="Niesler B."/>
            <person name="Ballabio A."/>
            <person name="Ansorge W."/>
            <person name="Ogata T."/>
            <person name="Rappold G.A."/>
        </authorList>
    </citation>
    <scope>NUCLEOTIDE SEQUENCE [MRNA]</scope>
</reference>
<reference key="2">
    <citation type="journal article" date="2000" name="Hum. Mol. Genet.">
        <title>A human sex-chromosomal gene family expressed in male germ cells and encoding variably charged proteins.</title>
        <authorList>
            <person name="Lahn B.T."/>
            <person name="Page D.C."/>
        </authorList>
    </citation>
    <scope>NUCLEOTIDE SEQUENCE [MRNA]</scope>
    <scope>VARIANT GLY-70</scope>
</reference>
<reference key="3">
    <citation type="journal article" date="2004" name="Genome Res.">
        <title>The status, quality, and expansion of the NIH full-length cDNA project: the Mammalian Gene Collection (MGC).</title>
        <authorList>
            <consortium name="The MGC Project Team"/>
        </authorList>
    </citation>
    <scope>NUCLEOTIDE SEQUENCE [LARGE SCALE MRNA]</scope>
    <scope>VARIANTS GLY-70 AND LEU-194</scope>
</reference>
<organism>
    <name type="scientific">Homo sapiens</name>
    <name type="common">Human</name>
    <dbReference type="NCBI Taxonomy" id="9606"/>
    <lineage>
        <taxon>Eukaryota</taxon>
        <taxon>Metazoa</taxon>
        <taxon>Chordata</taxon>
        <taxon>Craniata</taxon>
        <taxon>Vertebrata</taxon>
        <taxon>Euteleostomi</taxon>
        <taxon>Mammalia</taxon>
        <taxon>Eutheria</taxon>
        <taxon>Euarchontoglires</taxon>
        <taxon>Primates</taxon>
        <taxon>Haplorrhini</taxon>
        <taxon>Catarrhini</taxon>
        <taxon>Hominidae</taxon>
        <taxon>Homo</taxon>
    </lineage>
</organism>
<keyword id="KW-1185">Reference proteome</keyword>
<keyword id="KW-0677">Repeat</keyword>
<accession>Q9H320</accession>
<accession>A0JNS5</accession>
<accession>Q4V774</accession>
<accession>Q9P0H3</accession>
<protein>
    <recommendedName>
        <fullName>Variable charge X-linked protein 1</fullName>
    </recommendedName>
    <alternativeName>
        <fullName>Variable charge protein on X with ten repeats</fullName>
        <shortName>VCX-10r</shortName>
    </alternativeName>
    <alternativeName>
        <fullName>Variably charged protein X-B1</fullName>
        <shortName>VCX-B1</shortName>
    </alternativeName>
</protein>
<dbReference type="EMBL" id="AF167081">
    <property type="protein sequence ID" value="AAG41767.1"/>
    <property type="molecule type" value="mRNA"/>
</dbReference>
<dbReference type="EMBL" id="AF159129">
    <property type="protein sequence ID" value="AAF28174.1"/>
    <property type="molecule type" value="mRNA"/>
</dbReference>
<dbReference type="EMBL" id="BC098123">
    <property type="protein sequence ID" value="AAH98123.1"/>
    <property type="molecule type" value="mRNA"/>
</dbReference>
<dbReference type="EMBL" id="BC126903">
    <property type="protein sequence ID" value="AAI26904.1"/>
    <property type="molecule type" value="mRNA"/>
</dbReference>
<dbReference type="CCDS" id="CCDS14128.1"/>
<dbReference type="RefSeq" id="NP_001380591.1">
    <property type="nucleotide sequence ID" value="NM_001393662.1"/>
</dbReference>
<dbReference type="RefSeq" id="NP_038480.2">
    <property type="nucleotide sequence ID" value="NM_013452.3"/>
</dbReference>
<dbReference type="SMR" id="Q9H320"/>
<dbReference type="BioGRID" id="117763">
    <property type="interactions" value="4"/>
</dbReference>
<dbReference type="FunCoup" id="Q9H320">
    <property type="interactions" value="8"/>
</dbReference>
<dbReference type="STRING" id="9606.ENSP00000370447"/>
<dbReference type="iPTMnet" id="Q9H320"/>
<dbReference type="PhosphoSitePlus" id="Q9H320"/>
<dbReference type="BioMuta" id="VCX"/>
<dbReference type="DMDM" id="17368950"/>
<dbReference type="MassIVE" id="Q9H320"/>
<dbReference type="PaxDb" id="9606-ENSP00000370447"/>
<dbReference type="PeptideAtlas" id="Q9H320"/>
<dbReference type="Antibodypedia" id="52842">
    <property type="antibodies" value="59 antibodies from 14 providers"/>
</dbReference>
<dbReference type="DNASU" id="26609"/>
<dbReference type="Ensembl" id="ENST00000381059.7">
    <property type="protein sequence ID" value="ENSP00000370447.3"/>
    <property type="gene ID" value="ENSG00000182583.13"/>
</dbReference>
<dbReference type="Ensembl" id="ENST00000688183.1">
    <property type="protein sequence ID" value="ENSP00000509688.1"/>
    <property type="gene ID" value="ENSG00000182583.13"/>
</dbReference>
<dbReference type="GeneID" id="26609"/>
<dbReference type="KEGG" id="hsa:26609"/>
<dbReference type="MANE-Select" id="ENST00000688183.1">
    <property type="protein sequence ID" value="ENSP00000509688.1"/>
    <property type="RefSeq nucleotide sequence ID" value="NM_001393662.1"/>
    <property type="RefSeq protein sequence ID" value="NP_001380591.1"/>
</dbReference>
<dbReference type="UCSC" id="uc004crz.3">
    <property type="organism name" value="human"/>
</dbReference>
<dbReference type="AGR" id="HGNC:12667"/>
<dbReference type="CTD" id="26609"/>
<dbReference type="DisGeNET" id="26609"/>
<dbReference type="GeneCards" id="VCX"/>
<dbReference type="HGNC" id="HGNC:12667">
    <property type="gene designation" value="VCX"/>
</dbReference>
<dbReference type="HPA" id="ENSG00000182583">
    <property type="expression patterns" value="Tissue enriched (testis)"/>
</dbReference>
<dbReference type="MIM" id="300229">
    <property type="type" value="gene"/>
</dbReference>
<dbReference type="neXtProt" id="NX_Q9H320"/>
<dbReference type="OpenTargets" id="ENSG00000182583"/>
<dbReference type="PharmGKB" id="PA37290"/>
<dbReference type="VEuPathDB" id="HostDB:ENSG00000182583"/>
<dbReference type="eggNOG" id="KOG3216">
    <property type="taxonomic scope" value="Eukaryota"/>
</dbReference>
<dbReference type="GeneTree" id="ENSGT00440000034745"/>
<dbReference type="InParanoid" id="Q9H320"/>
<dbReference type="OMA" id="ELEEPCN"/>
<dbReference type="PAN-GO" id="Q9H320">
    <property type="GO annotations" value="1 GO annotation based on evolutionary models"/>
</dbReference>
<dbReference type="PathwayCommons" id="Q9H320"/>
<dbReference type="BioGRID-ORCS" id="26609">
    <property type="hits" value="63 hits in 665 CRISPR screens"/>
</dbReference>
<dbReference type="GeneWiki" id="VCX"/>
<dbReference type="GenomeRNAi" id="26609"/>
<dbReference type="Pharos" id="Q9H320">
    <property type="development level" value="Tbio"/>
</dbReference>
<dbReference type="PRO" id="PR:Q9H320"/>
<dbReference type="Proteomes" id="UP000005640">
    <property type="component" value="Chromosome X"/>
</dbReference>
<dbReference type="RNAct" id="Q9H320">
    <property type="molecule type" value="protein"/>
</dbReference>
<dbReference type="Bgee" id="ENSG00000182583">
    <property type="expression patterns" value="Expressed in right testis and 73 other cell types or tissues"/>
</dbReference>
<dbReference type="ExpressionAtlas" id="Q9H320">
    <property type="expression patterns" value="baseline and differential"/>
</dbReference>
<dbReference type="GO" id="GO:0005730">
    <property type="term" value="C:nucleolus"/>
    <property type="evidence" value="ECO:0000314"/>
    <property type="project" value="UniProtKB"/>
</dbReference>
<dbReference type="GO" id="GO:0005634">
    <property type="term" value="C:nucleus"/>
    <property type="evidence" value="ECO:0000314"/>
    <property type="project" value="UniProtKB"/>
</dbReference>
<dbReference type="GO" id="GO:0003682">
    <property type="term" value="F:chromatin binding"/>
    <property type="evidence" value="ECO:0000304"/>
    <property type="project" value="UniProtKB"/>
</dbReference>
<dbReference type="GO" id="GO:0007420">
    <property type="term" value="P:brain development"/>
    <property type="evidence" value="ECO:0000318"/>
    <property type="project" value="GO_Central"/>
</dbReference>
<dbReference type="GO" id="GO:0006325">
    <property type="term" value="P:chromatin organization"/>
    <property type="evidence" value="ECO:0000304"/>
    <property type="project" value="UniProtKB"/>
</dbReference>
<dbReference type="GO" id="GO:0042255">
    <property type="term" value="P:ribosome assembly"/>
    <property type="evidence" value="ECO:0000303"/>
    <property type="project" value="UniProtKB"/>
</dbReference>
<dbReference type="GO" id="GO:0007283">
    <property type="term" value="P:spermatogenesis"/>
    <property type="evidence" value="ECO:0000304"/>
    <property type="project" value="ProtInc"/>
</dbReference>
<dbReference type="InterPro" id="IPR026653">
    <property type="entry name" value="VCX/VCY1"/>
</dbReference>
<dbReference type="PANTHER" id="PTHR15251">
    <property type="entry name" value="TESTIS-SPECIFIC BASIC PROTEIN Y 1-RELATED"/>
    <property type="match status" value="1"/>
</dbReference>
<dbReference type="PANTHER" id="PTHR15251:SF2">
    <property type="entry name" value="TESTIS-SPECIFIC BASIC PROTEIN Y 1-RELATED"/>
    <property type="match status" value="1"/>
</dbReference>
<dbReference type="Pfam" id="PF15231">
    <property type="entry name" value="VCX_VCY"/>
    <property type="match status" value="1"/>
</dbReference>
<comment type="function">
    <text>May mediate a process in spermatogenesis or may play a role in sex ratio distortion.</text>
</comment>
<comment type="tissue specificity">
    <text>Expressed exclusively in testis.</text>
</comment>
<comment type="similarity">
    <text evidence="4">Belongs to the VCX/VCY family.</text>
</comment>
<feature type="chain" id="PRO_0000184659" description="Variable charge X-linked protein 1">
    <location>
        <begin position="1"/>
        <end position="206"/>
    </location>
</feature>
<feature type="repeat" description="1">
    <location>
        <begin position="104"/>
        <end position="113"/>
    </location>
</feature>
<feature type="repeat" description="2">
    <location>
        <begin position="114"/>
        <end position="123"/>
    </location>
</feature>
<feature type="repeat" description="3">
    <location>
        <begin position="124"/>
        <end position="133"/>
    </location>
</feature>
<feature type="repeat" description="4">
    <location>
        <begin position="134"/>
        <end position="143"/>
    </location>
</feature>
<feature type="repeat" description="5">
    <location>
        <begin position="144"/>
        <end position="153"/>
    </location>
</feature>
<feature type="repeat" description="6">
    <location>
        <begin position="154"/>
        <end position="163"/>
    </location>
</feature>
<feature type="repeat" description="7">
    <location>
        <begin position="164"/>
        <end position="173"/>
    </location>
</feature>
<feature type="repeat" description="8">
    <location>
        <begin position="174"/>
        <end position="183"/>
    </location>
</feature>
<feature type="repeat" description="9">
    <location>
        <begin position="184"/>
        <end position="193"/>
    </location>
</feature>
<feature type="repeat" description="10">
    <location>
        <begin position="194"/>
        <end position="203"/>
    </location>
</feature>
<feature type="region of interest" description="Disordered" evidence="1">
    <location>
        <begin position="1"/>
        <end position="206"/>
    </location>
</feature>
<feature type="region of interest" description="10 X 10 AA tandem repeats of L-S-Q-E-S-[EQ]-V-E-E-P">
    <location>
        <begin position="104"/>
        <end position="203"/>
    </location>
</feature>
<feature type="compositionally biased region" description="Basic residues" evidence="1">
    <location>
        <begin position="34"/>
        <end position="55"/>
    </location>
</feature>
<feature type="compositionally biased region" description="Low complexity" evidence="1">
    <location>
        <begin position="56"/>
        <end position="84"/>
    </location>
</feature>
<feature type="compositionally biased region" description="Acidic residues" evidence="1">
    <location>
        <begin position="108"/>
        <end position="124"/>
    </location>
</feature>
<feature type="compositionally biased region" description="Low complexity" evidence="1">
    <location>
        <begin position="125"/>
        <end position="137"/>
    </location>
</feature>
<feature type="compositionally biased region" description="Low complexity" evidence="1">
    <location>
        <begin position="145"/>
        <end position="157"/>
    </location>
</feature>
<feature type="compositionally biased region" description="Low complexity" evidence="1">
    <location>
        <begin position="165"/>
        <end position="177"/>
    </location>
</feature>
<feature type="compositionally biased region" description="Low complexity" evidence="1">
    <location>
        <begin position="185"/>
        <end position="197"/>
    </location>
</feature>
<feature type="sequence variant" id="VAR_070431" description="In dbSNP:rs6639946." evidence="2 3">
    <original>A</original>
    <variation>G</variation>
    <location>
        <position position="70"/>
    </location>
</feature>
<feature type="sequence variant" id="VAR_070432" description="In dbSNP:rs78342118." evidence="3">
    <original>P</original>
    <variation>L</variation>
    <location>
        <position position="194"/>
    </location>
</feature>
<feature type="sequence conflict" description="In Ref. 3; AAH98123." evidence="4" ref="3">
    <original>TEA</original>
    <variation>KET</variation>
    <location>
        <begin position="15"/>
        <end position="17"/>
    </location>
</feature>
<feature type="sequence conflict" description="In Ref. 3; AAH98123." evidence="4" ref="3">
    <original>A</original>
    <variation>S</variation>
    <location>
        <position position="108"/>
    </location>
</feature>
<gene>
    <name type="primary">VCX</name>
    <name type="synonym">VCX1</name>
    <name type="synonym">VCX10R</name>
    <name type="synonym">VCXB1</name>
</gene>
<proteinExistence type="evidence at transcript level"/>
<sequence>MSPKPRASGPPAKATEAGKRKSSSQPSPSDPKKKTTKVAKKGKAVRRGRRGKKGAATKMAAVTAPEAESAPAAPGPSDQPSQELPQHELPPEEPVSEGTQHDPLSQEAELEEPLSQESEVEEPLSQESQVEEPLSQESEVEEPLSQESQVEEPLSQESEVEEPLSQESQVEEPLSQESEMEEPLSQESQVEEPPSQESEMEELPSV</sequence>